<reference key="1">
    <citation type="journal article" date="2002" name="Nature">
        <title>Genome sequence of the plant pathogen Ralstonia solanacearum.</title>
        <authorList>
            <person name="Salanoubat M."/>
            <person name="Genin S."/>
            <person name="Artiguenave F."/>
            <person name="Gouzy J."/>
            <person name="Mangenot S."/>
            <person name="Arlat M."/>
            <person name="Billault A."/>
            <person name="Brottier P."/>
            <person name="Camus J.-C."/>
            <person name="Cattolico L."/>
            <person name="Chandler M."/>
            <person name="Choisne N."/>
            <person name="Claudel-Renard C."/>
            <person name="Cunnac S."/>
            <person name="Demange N."/>
            <person name="Gaspin C."/>
            <person name="Lavie M."/>
            <person name="Moisan A."/>
            <person name="Robert C."/>
            <person name="Saurin W."/>
            <person name="Schiex T."/>
            <person name="Siguier P."/>
            <person name="Thebault P."/>
            <person name="Whalen M."/>
            <person name="Wincker P."/>
            <person name="Levy M."/>
            <person name="Weissenbach J."/>
            <person name="Boucher C.A."/>
        </authorList>
    </citation>
    <scope>NUCLEOTIDE SEQUENCE [LARGE SCALE GENOMIC DNA]</scope>
    <source>
        <strain>ATCC BAA-1114 / GMI1000</strain>
    </source>
</reference>
<protein>
    <recommendedName>
        <fullName evidence="1">Ribonuclease 3</fullName>
        <ecNumber evidence="1">3.1.26.3</ecNumber>
    </recommendedName>
    <alternativeName>
        <fullName evidence="1">Ribonuclease III</fullName>
        <shortName evidence="1">RNase III</shortName>
    </alternativeName>
</protein>
<comment type="function">
    <text evidence="1">Digests double-stranded RNA. Involved in the processing of primary rRNA transcript to yield the immediate precursors to the large and small rRNAs (23S and 16S). Processes some mRNAs, and tRNAs when they are encoded in the rRNA operon. Processes pre-crRNA and tracrRNA of type II CRISPR loci if present in the organism.</text>
</comment>
<comment type="catalytic activity">
    <reaction evidence="1">
        <text>Endonucleolytic cleavage to 5'-phosphomonoester.</text>
        <dbReference type="EC" id="3.1.26.3"/>
    </reaction>
</comment>
<comment type="cofactor">
    <cofactor evidence="1">
        <name>Mg(2+)</name>
        <dbReference type="ChEBI" id="CHEBI:18420"/>
    </cofactor>
</comment>
<comment type="subunit">
    <text evidence="1">Homodimer.</text>
</comment>
<comment type="subcellular location">
    <subcellularLocation>
        <location evidence="1">Cytoplasm</location>
    </subcellularLocation>
</comment>
<comment type="similarity">
    <text evidence="1">Belongs to the ribonuclease III family.</text>
</comment>
<sequence>MSLEALQQRLGYRFSKPELLQQALTHRSHNAMHNERLEFLGDSILNCAVADMLYGMFGKLDEGDLSRVRANLVKQQALYEIAQMLLLPDELRLGEGELKSGGFRRPSILADALEAIFGAVFLDGGFDAARTLIRKLYIPILEQVDPRTLGKDAKTLLQEYLQGHKIALPQYAVVATHGAAHNQQFEVECTIPKLEIRVSGSGASRRAAEQSAAKLALEEAHRLVPQLVKRSRAERTGKTRKQATPPDPQLSLRLKE</sequence>
<evidence type="ECO:0000255" key="1">
    <source>
        <dbReference type="HAMAP-Rule" id="MF_00104"/>
    </source>
</evidence>
<evidence type="ECO:0000256" key="2">
    <source>
        <dbReference type="SAM" id="MobiDB-lite"/>
    </source>
</evidence>
<accession>Q8Y0I1</accession>
<feature type="chain" id="PRO_0000180422" description="Ribonuclease 3">
    <location>
        <begin position="1"/>
        <end position="256"/>
    </location>
</feature>
<feature type="domain" description="RNase III" evidence="1">
    <location>
        <begin position="3"/>
        <end position="125"/>
    </location>
</feature>
<feature type="domain" description="DRBM" evidence="1">
    <location>
        <begin position="152"/>
        <end position="222"/>
    </location>
</feature>
<feature type="region of interest" description="Disordered" evidence="2">
    <location>
        <begin position="227"/>
        <end position="256"/>
    </location>
</feature>
<feature type="active site" evidence="1">
    <location>
        <position position="42"/>
    </location>
</feature>
<feature type="active site" evidence="1">
    <location>
        <position position="114"/>
    </location>
</feature>
<feature type="binding site" evidence="1">
    <location>
        <position position="38"/>
    </location>
    <ligand>
        <name>Mg(2+)</name>
        <dbReference type="ChEBI" id="CHEBI:18420"/>
    </ligand>
</feature>
<feature type="binding site" evidence="1">
    <location>
        <position position="111"/>
    </location>
    <ligand>
        <name>Mg(2+)</name>
        <dbReference type="ChEBI" id="CHEBI:18420"/>
    </ligand>
</feature>
<feature type="binding site" evidence="1">
    <location>
        <position position="114"/>
    </location>
    <ligand>
        <name>Mg(2+)</name>
        <dbReference type="ChEBI" id="CHEBI:18420"/>
    </ligand>
</feature>
<keyword id="KW-0963">Cytoplasm</keyword>
<keyword id="KW-0255">Endonuclease</keyword>
<keyword id="KW-0378">Hydrolase</keyword>
<keyword id="KW-0460">Magnesium</keyword>
<keyword id="KW-0479">Metal-binding</keyword>
<keyword id="KW-0507">mRNA processing</keyword>
<keyword id="KW-0540">Nuclease</keyword>
<keyword id="KW-1185">Reference proteome</keyword>
<keyword id="KW-0694">RNA-binding</keyword>
<keyword id="KW-0698">rRNA processing</keyword>
<keyword id="KW-0699">rRNA-binding</keyword>
<keyword id="KW-0819">tRNA processing</keyword>
<name>RNC_RALN1</name>
<gene>
    <name evidence="1" type="primary">rnc</name>
    <name type="ordered locus">RSc1063</name>
    <name type="ORF">RS04144</name>
</gene>
<proteinExistence type="inferred from homology"/>
<dbReference type="EC" id="3.1.26.3" evidence="1"/>
<dbReference type="EMBL" id="AL646052">
    <property type="protein sequence ID" value="CAD14765.1"/>
    <property type="molecule type" value="Genomic_DNA"/>
</dbReference>
<dbReference type="RefSeq" id="WP_011001013.1">
    <property type="nucleotide sequence ID" value="NC_003295.1"/>
</dbReference>
<dbReference type="SMR" id="Q8Y0I1"/>
<dbReference type="STRING" id="267608.RSc1063"/>
<dbReference type="EnsemblBacteria" id="CAD14765">
    <property type="protein sequence ID" value="CAD14765"/>
    <property type="gene ID" value="RSc1063"/>
</dbReference>
<dbReference type="KEGG" id="rso:RSc1063"/>
<dbReference type="eggNOG" id="COG0571">
    <property type="taxonomic scope" value="Bacteria"/>
</dbReference>
<dbReference type="HOGENOM" id="CLU_000907_1_1_4"/>
<dbReference type="Proteomes" id="UP000001436">
    <property type="component" value="Chromosome"/>
</dbReference>
<dbReference type="GO" id="GO:0005737">
    <property type="term" value="C:cytoplasm"/>
    <property type="evidence" value="ECO:0007669"/>
    <property type="project" value="UniProtKB-SubCell"/>
</dbReference>
<dbReference type="GO" id="GO:0003725">
    <property type="term" value="F:double-stranded RNA binding"/>
    <property type="evidence" value="ECO:0007669"/>
    <property type="project" value="TreeGrafter"/>
</dbReference>
<dbReference type="GO" id="GO:0046872">
    <property type="term" value="F:metal ion binding"/>
    <property type="evidence" value="ECO:0007669"/>
    <property type="project" value="UniProtKB-KW"/>
</dbReference>
<dbReference type="GO" id="GO:0004525">
    <property type="term" value="F:ribonuclease III activity"/>
    <property type="evidence" value="ECO:0007669"/>
    <property type="project" value="UniProtKB-UniRule"/>
</dbReference>
<dbReference type="GO" id="GO:0019843">
    <property type="term" value="F:rRNA binding"/>
    <property type="evidence" value="ECO:0007669"/>
    <property type="project" value="UniProtKB-KW"/>
</dbReference>
<dbReference type="GO" id="GO:0006397">
    <property type="term" value="P:mRNA processing"/>
    <property type="evidence" value="ECO:0007669"/>
    <property type="project" value="UniProtKB-UniRule"/>
</dbReference>
<dbReference type="GO" id="GO:0010468">
    <property type="term" value="P:regulation of gene expression"/>
    <property type="evidence" value="ECO:0007669"/>
    <property type="project" value="TreeGrafter"/>
</dbReference>
<dbReference type="GO" id="GO:0006364">
    <property type="term" value="P:rRNA processing"/>
    <property type="evidence" value="ECO:0007669"/>
    <property type="project" value="UniProtKB-UniRule"/>
</dbReference>
<dbReference type="GO" id="GO:0008033">
    <property type="term" value="P:tRNA processing"/>
    <property type="evidence" value="ECO:0007669"/>
    <property type="project" value="UniProtKB-KW"/>
</dbReference>
<dbReference type="CDD" id="cd10845">
    <property type="entry name" value="DSRM_RNAse_III_family"/>
    <property type="match status" value="1"/>
</dbReference>
<dbReference type="CDD" id="cd00593">
    <property type="entry name" value="RIBOc"/>
    <property type="match status" value="1"/>
</dbReference>
<dbReference type="FunFam" id="1.10.1520.10:FF:000001">
    <property type="entry name" value="Ribonuclease 3"/>
    <property type="match status" value="1"/>
</dbReference>
<dbReference type="FunFam" id="3.30.160.20:FF:000003">
    <property type="entry name" value="Ribonuclease 3"/>
    <property type="match status" value="1"/>
</dbReference>
<dbReference type="Gene3D" id="3.30.160.20">
    <property type="match status" value="1"/>
</dbReference>
<dbReference type="Gene3D" id="1.10.1520.10">
    <property type="entry name" value="Ribonuclease III domain"/>
    <property type="match status" value="1"/>
</dbReference>
<dbReference type="HAMAP" id="MF_00104">
    <property type="entry name" value="RNase_III"/>
    <property type="match status" value="1"/>
</dbReference>
<dbReference type="InterPro" id="IPR014720">
    <property type="entry name" value="dsRBD_dom"/>
</dbReference>
<dbReference type="InterPro" id="IPR011907">
    <property type="entry name" value="RNase_III"/>
</dbReference>
<dbReference type="InterPro" id="IPR000999">
    <property type="entry name" value="RNase_III_dom"/>
</dbReference>
<dbReference type="InterPro" id="IPR036389">
    <property type="entry name" value="RNase_III_sf"/>
</dbReference>
<dbReference type="NCBIfam" id="TIGR02191">
    <property type="entry name" value="RNaseIII"/>
    <property type="match status" value="1"/>
</dbReference>
<dbReference type="PANTHER" id="PTHR11207:SF0">
    <property type="entry name" value="RIBONUCLEASE 3"/>
    <property type="match status" value="1"/>
</dbReference>
<dbReference type="PANTHER" id="PTHR11207">
    <property type="entry name" value="RIBONUCLEASE III"/>
    <property type="match status" value="1"/>
</dbReference>
<dbReference type="Pfam" id="PF00035">
    <property type="entry name" value="dsrm"/>
    <property type="match status" value="1"/>
</dbReference>
<dbReference type="Pfam" id="PF14622">
    <property type="entry name" value="Ribonucleas_3_3"/>
    <property type="match status" value="1"/>
</dbReference>
<dbReference type="SMART" id="SM00358">
    <property type="entry name" value="DSRM"/>
    <property type="match status" value="1"/>
</dbReference>
<dbReference type="SMART" id="SM00535">
    <property type="entry name" value="RIBOc"/>
    <property type="match status" value="1"/>
</dbReference>
<dbReference type="SUPFAM" id="SSF54768">
    <property type="entry name" value="dsRNA-binding domain-like"/>
    <property type="match status" value="1"/>
</dbReference>
<dbReference type="SUPFAM" id="SSF69065">
    <property type="entry name" value="RNase III domain-like"/>
    <property type="match status" value="1"/>
</dbReference>
<dbReference type="PROSITE" id="PS50137">
    <property type="entry name" value="DS_RBD"/>
    <property type="match status" value="1"/>
</dbReference>
<dbReference type="PROSITE" id="PS00517">
    <property type="entry name" value="RNASE_3_1"/>
    <property type="match status" value="1"/>
</dbReference>
<dbReference type="PROSITE" id="PS50142">
    <property type="entry name" value="RNASE_3_2"/>
    <property type="match status" value="1"/>
</dbReference>
<organism>
    <name type="scientific">Ralstonia nicotianae (strain ATCC BAA-1114 / GMI1000)</name>
    <name type="common">Ralstonia solanacearum</name>
    <dbReference type="NCBI Taxonomy" id="267608"/>
    <lineage>
        <taxon>Bacteria</taxon>
        <taxon>Pseudomonadati</taxon>
        <taxon>Pseudomonadota</taxon>
        <taxon>Betaproteobacteria</taxon>
        <taxon>Burkholderiales</taxon>
        <taxon>Burkholderiaceae</taxon>
        <taxon>Ralstonia</taxon>
        <taxon>Ralstonia solanacearum species complex</taxon>
    </lineage>
</organism>